<evidence type="ECO:0000255" key="1">
    <source>
        <dbReference type="PROSITE-ProRule" id="PRU00457"/>
    </source>
</evidence>
<evidence type="ECO:0000305" key="2"/>
<comment type="function">
    <text>Involved in the transposition of the insertion sequence IS3.</text>
</comment>
<comment type="similarity">
    <text evidence="2">Belongs to the transposase IS3/IS150/IS904 family.</text>
</comment>
<accession>P0CF83</accession>
<accession>O08009</accession>
<accession>O08012</accession>
<accession>O08304</accession>
<accession>P05822</accession>
<accession>P77673</accession>
<accession>Q2MBI8</accession>
<sequence>MKYVFIEKHQAEFSIKAMCRVLRVARSGWYTWCQRRTRISTRQQFRQHCDSVVLAAFTRSKQRYGAPRLTDELRAQGYPFNVKTVAASLRRQGLRAKASRKFSPVSYRAHGLPVSENLLEQDFYASGPNQKWAGDITYLRTDEGWLYLAVVIDLWSRAVIGWSMSPRMTAQLACDALQMALWRRKRPRNVIVHTDRGGQYCSADYQAQLKRHNLRGSMSAKGCCYDNACVESFFHSLKVECIHGEHFISREIMRATVFNYIECDYNRWRRHSWCGGLSPEQFENKNLA</sequence>
<name>INSF5_ECOLI</name>
<feature type="chain" id="PRO_0000394037" description="Transposase InsF for insertion sequence IS3E">
    <location>
        <begin position="1"/>
        <end position="288"/>
    </location>
</feature>
<feature type="domain" description="Integrase catalytic" evidence="1">
    <location>
        <begin position="124"/>
        <end position="287"/>
    </location>
</feature>
<dbReference type="EMBL" id="U00096">
    <property type="protein sequence ID" value="AAC75150.1"/>
    <property type="molecule type" value="Genomic_DNA"/>
</dbReference>
<dbReference type="EMBL" id="AP009048">
    <property type="protein sequence ID" value="BAA15941.1"/>
    <property type="molecule type" value="Genomic_DNA"/>
</dbReference>
<dbReference type="PIR" id="C64756">
    <property type="entry name" value="TQECI3"/>
</dbReference>
<dbReference type="RefSeq" id="NP_061381.1">
    <property type="nucleotide sequence ID" value="NC_002483.1"/>
</dbReference>
<dbReference type="RefSeq" id="NP_416593.1">
    <property type="nucleotide sequence ID" value="NC_000913.3"/>
</dbReference>
<dbReference type="SMR" id="P0CF83"/>
<dbReference type="FunCoup" id="P0CF83">
    <property type="interactions" value="12"/>
</dbReference>
<dbReference type="EnsemblBacteria" id="AAC75150">
    <property type="protein sequence ID" value="AAC75150"/>
    <property type="gene ID" value="b2089"/>
</dbReference>
<dbReference type="GeneID" id="946629"/>
<dbReference type="KEGG" id="ecj:JW2073"/>
<dbReference type="KEGG" id="eco:b0299"/>
<dbReference type="KEGG" id="eco:b0372"/>
<dbReference type="KEGG" id="eco:b0541"/>
<dbReference type="KEGG" id="eco:b1026"/>
<dbReference type="KEGG" id="eco:b2089"/>
<dbReference type="KEGG" id="ecoc:C3026_01470"/>
<dbReference type="KEGG" id="ecoc:C3026_02660"/>
<dbReference type="KEGG" id="ecoc:C3026_06250"/>
<dbReference type="KEGG" id="ecoc:C3026_11730"/>
<dbReference type="KEGG" id="ecoc:C3026_24100"/>
<dbReference type="KEGG" id="ecoc:C3026_24645"/>
<dbReference type="PATRIC" id="fig|511145.12.peg.1066"/>
<dbReference type="EchoBASE" id="EB4713"/>
<dbReference type="HOGENOM" id="CLU_027402_4_2_6"/>
<dbReference type="InParanoid" id="P0CF83"/>
<dbReference type="OMA" id="DNARCES"/>
<dbReference type="PhylomeDB" id="P0CF83"/>
<dbReference type="BioCyc" id="EcoCyc:MONOMER0-4447"/>
<dbReference type="PRO" id="PR:P0CF83"/>
<dbReference type="Proteomes" id="UP000000625">
    <property type="component" value="Chromosome"/>
</dbReference>
<dbReference type="GO" id="GO:0003677">
    <property type="term" value="F:DNA binding"/>
    <property type="evidence" value="ECO:0007669"/>
    <property type="project" value="UniProtKB-KW"/>
</dbReference>
<dbReference type="GO" id="GO:0015074">
    <property type="term" value="P:DNA integration"/>
    <property type="evidence" value="ECO:0007669"/>
    <property type="project" value="InterPro"/>
</dbReference>
<dbReference type="GO" id="GO:0006310">
    <property type="term" value="P:DNA recombination"/>
    <property type="evidence" value="ECO:0007669"/>
    <property type="project" value="UniProtKB-KW"/>
</dbReference>
<dbReference type="GO" id="GO:0032196">
    <property type="term" value="P:transposition"/>
    <property type="evidence" value="ECO:0007669"/>
    <property type="project" value="UniProtKB-KW"/>
</dbReference>
<dbReference type="FunFam" id="3.30.420.10:FF:000030">
    <property type="entry name" value="IS3, transposase orfB"/>
    <property type="match status" value="1"/>
</dbReference>
<dbReference type="Gene3D" id="3.30.420.10">
    <property type="entry name" value="Ribonuclease H-like superfamily/Ribonuclease H"/>
    <property type="match status" value="1"/>
</dbReference>
<dbReference type="InterPro" id="IPR025948">
    <property type="entry name" value="HTH-like_dom"/>
</dbReference>
<dbReference type="InterPro" id="IPR001584">
    <property type="entry name" value="Integrase_cat-core"/>
</dbReference>
<dbReference type="InterPro" id="IPR012337">
    <property type="entry name" value="RNaseH-like_sf"/>
</dbReference>
<dbReference type="InterPro" id="IPR036397">
    <property type="entry name" value="RNaseH_sf"/>
</dbReference>
<dbReference type="InterPro" id="IPR048020">
    <property type="entry name" value="Transpos_IS3"/>
</dbReference>
<dbReference type="InterPro" id="IPR050900">
    <property type="entry name" value="Transposase_IS3/IS150/IS904"/>
</dbReference>
<dbReference type="NCBIfam" id="NF033516">
    <property type="entry name" value="transpos_IS3"/>
    <property type="match status" value="1"/>
</dbReference>
<dbReference type="PANTHER" id="PTHR46889:SF6">
    <property type="entry name" value="TRANSPOSASE INSF FOR INSERTION SEQUENCE IS3B"/>
    <property type="match status" value="1"/>
</dbReference>
<dbReference type="PANTHER" id="PTHR46889">
    <property type="entry name" value="TRANSPOSASE INSF FOR INSERTION SEQUENCE IS3B-RELATED"/>
    <property type="match status" value="1"/>
</dbReference>
<dbReference type="Pfam" id="PF13276">
    <property type="entry name" value="HTH_21"/>
    <property type="match status" value="1"/>
</dbReference>
<dbReference type="Pfam" id="PF00665">
    <property type="entry name" value="rve"/>
    <property type="match status" value="1"/>
</dbReference>
<dbReference type="Pfam" id="PF13333">
    <property type="entry name" value="rve_2"/>
    <property type="match status" value="1"/>
</dbReference>
<dbReference type="SUPFAM" id="SSF53098">
    <property type="entry name" value="Ribonuclease H-like"/>
    <property type="match status" value="1"/>
</dbReference>
<dbReference type="PROSITE" id="PS50994">
    <property type="entry name" value="INTEGRASE"/>
    <property type="match status" value="1"/>
</dbReference>
<protein>
    <recommendedName>
        <fullName>Transposase InsF for insertion sequence IS3E</fullName>
    </recommendedName>
</protein>
<organism>
    <name type="scientific">Escherichia coli (strain K12)</name>
    <dbReference type="NCBI Taxonomy" id="83333"/>
    <lineage>
        <taxon>Bacteria</taxon>
        <taxon>Pseudomonadati</taxon>
        <taxon>Pseudomonadota</taxon>
        <taxon>Gammaproteobacteria</taxon>
        <taxon>Enterobacterales</taxon>
        <taxon>Enterobacteriaceae</taxon>
        <taxon>Escherichia</taxon>
    </lineage>
</organism>
<proteinExistence type="inferred from homology"/>
<gene>
    <name type="primary">insF5</name>
    <name type="ordered locus">b2089</name>
    <name type="ordered locus">JW2073</name>
</gene>
<reference key="1">
    <citation type="journal article" date="1996" name="DNA Res.">
        <title>A 460-kb DNA sequence of the Escherichia coli K-12 genome corresponding to the 40.1-50.0 min region on the linkage map.</title>
        <authorList>
            <person name="Itoh T."/>
            <person name="Aiba H."/>
            <person name="Baba T."/>
            <person name="Fujita K."/>
            <person name="Hayashi K."/>
            <person name="Inada T."/>
            <person name="Isono K."/>
            <person name="Kasai H."/>
            <person name="Kimura S."/>
            <person name="Kitakawa M."/>
            <person name="Kitagawa M."/>
            <person name="Makino K."/>
            <person name="Miki T."/>
            <person name="Mizobuchi K."/>
            <person name="Mori H."/>
            <person name="Mori T."/>
            <person name="Motomura K."/>
            <person name="Nakade S."/>
            <person name="Nakamura Y."/>
            <person name="Nashimoto H."/>
            <person name="Nishio Y."/>
            <person name="Oshima T."/>
            <person name="Saito N."/>
            <person name="Sampei G."/>
            <person name="Seki Y."/>
            <person name="Sivasundaram S."/>
            <person name="Tagami H."/>
            <person name="Takeda J."/>
            <person name="Takemoto K."/>
            <person name="Wada C."/>
            <person name="Yamamoto Y."/>
            <person name="Horiuchi T."/>
        </authorList>
    </citation>
    <scope>NUCLEOTIDE SEQUENCE [LARGE SCALE GENOMIC DNA]</scope>
    <source>
        <strain>K12 / W3110 / ATCC 27325 / DSM 5911</strain>
    </source>
</reference>
<reference key="2">
    <citation type="journal article" date="1997" name="Science">
        <title>The complete genome sequence of Escherichia coli K-12.</title>
        <authorList>
            <person name="Blattner F.R."/>
            <person name="Plunkett G. III"/>
            <person name="Bloch C.A."/>
            <person name="Perna N.T."/>
            <person name="Burland V."/>
            <person name="Riley M."/>
            <person name="Collado-Vides J."/>
            <person name="Glasner J.D."/>
            <person name="Rode C.K."/>
            <person name="Mayhew G.F."/>
            <person name="Gregor J."/>
            <person name="Davis N.W."/>
            <person name="Kirkpatrick H.A."/>
            <person name="Goeden M.A."/>
            <person name="Rose D.J."/>
            <person name="Mau B."/>
            <person name="Shao Y."/>
        </authorList>
    </citation>
    <scope>NUCLEOTIDE SEQUENCE [LARGE SCALE GENOMIC DNA]</scope>
    <source>
        <strain>K12 / MG1655 / ATCC 47076</strain>
    </source>
</reference>
<reference key="3">
    <citation type="journal article" date="2006" name="Mol. Syst. Biol.">
        <title>Highly accurate genome sequences of Escherichia coli K-12 strains MG1655 and W3110.</title>
        <authorList>
            <person name="Hayashi K."/>
            <person name="Morooka N."/>
            <person name="Yamamoto Y."/>
            <person name="Fujita K."/>
            <person name="Isono K."/>
            <person name="Choi S."/>
            <person name="Ohtsubo E."/>
            <person name="Baba T."/>
            <person name="Wanner B.L."/>
            <person name="Mori H."/>
            <person name="Horiuchi T."/>
        </authorList>
    </citation>
    <scope>NUCLEOTIDE SEQUENCE [LARGE SCALE GENOMIC DNA]</scope>
    <source>
        <strain>K12 / W3110 / ATCC 27325 / DSM 5911</strain>
    </source>
</reference>
<keyword id="KW-0233">DNA recombination</keyword>
<keyword id="KW-0238">DNA-binding</keyword>
<keyword id="KW-1185">Reference proteome</keyword>
<keyword id="KW-0814">Transposable element</keyword>
<keyword id="KW-0815">Transposition</keyword>